<keyword id="KW-0025">Alternative splicing</keyword>
<keyword id="KW-0175">Coiled coil</keyword>
<keyword id="KW-0256">Endoplasmic reticulum</keyword>
<keyword id="KW-0325">Glycoprotein</keyword>
<keyword id="KW-0472">Membrane</keyword>
<keyword id="KW-1185">Reference proteome</keyword>
<keyword id="KW-0812">Transmembrane</keyword>
<keyword id="KW-1133">Transmembrane helix</keyword>
<accession>Q5EAJ6</accession>
<accession>Q5M859</accession>
<reference key="1">
    <citation type="journal article" date="2004" name="Cell Death Differ.">
        <title>A highly conserved proapoptotic gene, IKIP, located next to the APAF1 gene locus, is regulated by p53.</title>
        <authorList>
            <person name="Hofer-Warbinek R."/>
            <person name="Schmid J.A."/>
            <person name="Mayer H."/>
            <person name="Winsauer G."/>
            <person name="Orel L."/>
            <person name="Mueller B."/>
            <person name="Wiesner C."/>
            <person name="Binder B.R."/>
            <person name="de Martin R."/>
        </authorList>
    </citation>
    <scope>NUCLEOTIDE SEQUENCE [MRNA] (ISOFORMS 1 AND 2)</scope>
</reference>
<reference key="2">
    <citation type="journal article" date="2004" name="Genome Res.">
        <title>The status, quality, and expansion of the NIH full-length cDNA project: the Mammalian Gene Collection (MGC).</title>
        <authorList>
            <consortium name="The MGC Project Team"/>
        </authorList>
    </citation>
    <scope>NUCLEOTIDE SEQUENCE [LARGE SCALE MRNA] (ISOFORM 2)</scope>
    <source>
        <tissue>Thymus</tissue>
    </source>
</reference>
<dbReference type="EMBL" id="BN000112">
    <property type="protein sequence ID" value="CAD62384.1"/>
    <property type="molecule type" value="mRNA"/>
</dbReference>
<dbReference type="EMBL" id="BN000113">
    <property type="protein sequence ID" value="CAD62385.1"/>
    <property type="molecule type" value="mRNA"/>
</dbReference>
<dbReference type="EMBL" id="BC088210">
    <property type="protein sequence ID" value="AAH88210.1"/>
    <property type="molecule type" value="mRNA"/>
</dbReference>
<dbReference type="RefSeq" id="NP_001009430.2">
    <molecule id="Q5EAJ6-1"/>
    <property type="nucleotide sequence ID" value="NM_001009430.3"/>
</dbReference>
<dbReference type="RefSeq" id="NP_001399534.1">
    <molecule id="Q5EAJ6-2"/>
    <property type="nucleotide sequence ID" value="NM_001412605.1"/>
</dbReference>
<dbReference type="RefSeq" id="XP_006241312.1">
    <property type="nucleotide sequence ID" value="XM_006241250.3"/>
</dbReference>
<dbReference type="SMR" id="Q5EAJ6"/>
<dbReference type="BioGRID" id="260816">
    <property type="interactions" value="1"/>
</dbReference>
<dbReference type="FunCoup" id="Q5EAJ6">
    <property type="interactions" value="764"/>
</dbReference>
<dbReference type="STRING" id="10116.ENSRNOP00000010913"/>
<dbReference type="GlyCosmos" id="Q5EAJ6">
    <property type="glycosylation" value="1 site, No reported glycans"/>
</dbReference>
<dbReference type="GlyGen" id="Q5EAJ6">
    <property type="glycosylation" value="1 site"/>
</dbReference>
<dbReference type="PhosphoSitePlus" id="Q5EAJ6"/>
<dbReference type="PaxDb" id="10116-ENSRNOP00000010913"/>
<dbReference type="Ensembl" id="ENSRNOT00000010914.5">
    <molecule id="Q5EAJ6-1"/>
    <property type="protein sequence ID" value="ENSRNOP00000010913.2"/>
    <property type="gene ID" value="ENSRNOG00000008247.7"/>
</dbReference>
<dbReference type="Ensembl" id="ENSRNOT00000010929.5">
    <molecule id="Q5EAJ6-2"/>
    <property type="protein sequence ID" value="ENSRNOP00000010929.3"/>
    <property type="gene ID" value="ENSRNOG00000008247.7"/>
</dbReference>
<dbReference type="GeneID" id="314730"/>
<dbReference type="KEGG" id="rno:314730"/>
<dbReference type="UCSC" id="RGD:1305457">
    <molecule id="Q5EAJ6-1"/>
    <property type="organism name" value="rat"/>
</dbReference>
<dbReference type="AGR" id="RGD:1305457"/>
<dbReference type="CTD" id="121457"/>
<dbReference type="RGD" id="1305457">
    <property type="gene designation" value="Ikbip"/>
</dbReference>
<dbReference type="eggNOG" id="ENOG502RXC3">
    <property type="taxonomic scope" value="Eukaryota"/>
</dbReference>
<dbReference type="GeneTree" id="ENSGT00500000045001"/>
<dbReference type="HOGENOM" id="CLU_061486_1_0_1"/>
<dbReference type="InParanoid" id="Q5EAJ6"/>
<dbReference type="OMA" id="LTLQMFN"/>
<dbReference type="OrthoDB" id="9907187at2759"/>
<dbReference type="PhylomeDB" id="Q5EAJ6"/>
<dbReference type="TreeFam" id="TF331715"/>
<dbReference type="PRO" id="PR:Q5EAJ6"/>
<dbReference type="Proteomes" id="UP000002494">
    <property type="component" value="Chromosome 7"/>
</dbReference>
<dbReference type="Bgee" id="ENSRNOG00000008247">
    <property type="expression patterns" value="Expressed in ovary and 19 other cell types or tissues"/>
</dbReference>
<dbReference type="GO" id="GO:0005783">
    <property type="term" value="C:endoplasmic reticulum"/>
    <property type="evidence" value="ECO:0000250"/>
    <property type="project" value="HGNC-UCL"/>
</dbReference>
<dbReference type="GO" id="GO:0005789">
    <property type="term" value="C:endoplasmic reticulum membrane"/>
    <property type="evidence" value="ECO:0007669"/>
    <property type="project" value="UniProtKB-SubCell"/>
</dbReference>
<dbReference type="GO" id="GO:0005730">
    <property type="term" value="C:nucleolus"/>
    <property type="evidence" value="ECO:0007669"/>
    <property type="project" value="Ensembl"/>
</dbReference>
<dbReference type="InterPro" id="IPR024152">
    <property type="entry name" value="Inh_kappa-B_kinase-int"/>
</dbReference>
<dbReference type="PANTHER" id="PTHR21734">
    <property type="entry name" value="INHIBITOR OF NUCLEAR FACTOR KAPPA-B KINASE-INTERACTING PROTEIN"/>
    <property type="match status" value="1"/>
</dbReference>
<dbReference type="PANTHER" id="PTHR21734:SF11">
    <property type="entry name" value="INHIBITOR OF NUCLEAR FACTOR KAPPA-B KINASE-INTERACTING PROTEIN"/>
    <property type="match status" value="1"/>
</dbReference>
<dbReference type="SUPFAM" id="SSF57997">
    <property type="entry name" value="Tropomyosin"/>
    <property type="match status" value="1"/>
</dbReference>
<proteinExistence type="evidence at transcript level"/>
<comment type="function">
    <text evidence="1">Target of p53/TP53 with pro-apoptotic function.</text>
</comment>
<comment type="subcellular location">
    <subcellularLocation>
        <location evidence="1">Endoplasmic reticulum membrane</location>
        <topology evidence="1">Single-pass membrane protein</topology>
    </subcellularLocation>
</comment>
<comment type="alternative products">
    <event type="alternative splicing"/>
    <isoform>
        <id>Q5EAJ6-1</id>
        <name>1</name>
        <name>Ikip1</name>
        <sequence type="displayed"/>
    </isoform>
    <isoform>
        <id>Q5EAJ6-2</id>
        <name>2</name>
        <name>Ikip2</name>
        <sequence type="described" ref="VSP_034412"/>
    </isoform>
</comment>
<comment type="PTM">
    <text evidence="1">N-glycosylated at Asn-151.</text>
</comment>
<comment type="miscellaneous">
    <text>Shares a common promoter with APAF1 from which the 2 genes are transcribed in opposite directions.</text>
</comment>
<feature type="chain" id="PRO_0000342263" description="Inhibitor of nuclear factor kappa-B kinase-interacting protein">
    <location>
        <begin position="1"/>
        <end position="373"/>
    </location>
</feature>
<feature type="transmembrane region" description="Helical" evidence="2">
    <location>
        <begin position="43"/>
        <end position="59"/>
    </location>
</feature>
<feature type="region of interest" description="Disordered" evidence="3">
    <location>
        <begin position="1"/>
        <end position="38"/>
    </location>
</feature>
<feature type="coiled-coil region" evidence="2">
    <location>
        <begin position="64"/>
        <end position="257"/>
    </location>
</feature>
<feature type="coiled-coil region" evidence="2">
    <location>
        <begin position="290"/>
        <end position="325"/>
    </location>
</feature>
<feature type="compositionally biased region" description="Basic residues" evidence="3">
    <location>
        <begin position="1"/>
        <end position="11"/>
    </location>
</feature>
<feature type="compositionally biased region" description="Basic and acidic residues" evidence="3">
    <location>
        <begin position="18"/>
        <end position="30"/>
    </location>
</feature>
<feature type="glycosylation site" description="N-linked (GlcNAc...) asparagine" evidence="2">
    <location>
        <position position="151"/>
    </location>
</feature>
<feature type="splice variant" id="VSP_034412" description="In isoform 2." evidence="4 5">
    <original>LESTENTLQEATSSMSLMTQFEQEVAGLQRSIHDIENSEEMLTQKLQNLNEKFQNITDLWKRTLVEMSDNTAVFKSEAKSTHSEVTLKINSAEQEIKLLTERLKDLEDSTLRNIRTVSRQEEEDLLRVEAQLSSDTKAVEKLEEEQRTLLARDEDLTDKLSSYEPKVEECKAHLPTIENAVHSVLRVSQDLIGTERKMEELTVQMFNMEDDMLKAVSEIMEMQNTLEGIQYDNSLLKMQNELVVLKGKVHDFMAYSSAGEKGTLEEYNLENKGTDDY</original>
    <variation>YQKCEALLEQLKAFQIVAHLKLLQEEIHGMKTWSIGITEKQKILNNTLTSLSEDIIKVDQGTASVAKDMGLKITSVKTDVRRISGLVTEVESLTDAVQALENKVKKVETATVESIGDLLSSSIDRTTALRKTASENSRRIDSVTKRLAELQGDFDEHTDRFLSLESERAKVLKAVSFANDLKPKVYNLKKDFSRLEPLVNDLTLRIGRLGSDLMQREKEIASLKEKISNLTIVQAAIKDMKDEITHISG</variation>
    <location>
        <begin position="97"/>
        <end position="373"/>
    </location>
</feature>
<sequence>MSEVKSRKKPGPKVAAPEPEKRSDGRKNPEARGGAGWADPRTGLSLLSLATSLGLAWLVFQQSEKFAKVENQYRLLQTESSEFQGLQSKISLISNKLESTENTLQEATSSMSLMTQFEQEVAGLQRSIHDIENSEEMLTQKLQNLNEKFQNITDLWKRTLVEMSDNTAVFKSEAKSTHSEVTLKINSAEQEIKLLTERLKDLEDSTLRNIRTVSRQEEEDLLRVEAQLSSDTKAVEKLEEEQRTLLARDEDLTDKLSSYEPKVEECKAHLPTIENAVHSVLRVSQDLIGTERKMEELTVQMFNMEDDMLKAVSEIMEMQNTLEGIQYDNSLLKMQNELVVLKGKVHDFMAYSSAGEKGTLEEYNLENKGTDDY</sequence>
<gene>
    <name type="primary">Ikbip</name>
    <name type="synonym">Ikip</name>
</gene>
<name>IKIP_RAT</name>
<evidence type="ECO:0000250" key="1"/>
<evidence type="ECO:0000255" key="2"/>
<evidence type="ECO:0000256" key="3">
    <source>
        <dbReference type="SAM" id="MobiDB-lite"/>
    </source>
</evidence>
<evidence type="ECO:0000303" key="4">
    <source>
    </source>
</evidence>
<evidence type="ECO:0000303" key="5">
    <source>
    </source>
</evidence>
<protein>
    <recommendedName>
        <fullName>Inhibitor of nuclear factor kappa-B kinase-interacting protein</fullName>
        <shortName>I kappa-B kinase-interacting protein</shortName>
        <shortName>IKBKB-interacting protein</shortName>
        <shortName>IKK-interacting protein</shortName>
    </recommendedName>
</protein>
<organism>
    <name type="scientific">Rattus norvegicus</name>
    <name type="common">Rat</name>
    <dbReference type="NCBI Taxonomy" id="10116"/>
    <lineage>
        <taxon>Eukaryota</taxon>
        <taxon>Metazoa</taxon>
        <taxon>Chordata</taxon>
        <taxon>Craniata</taxon>
        <taxon>Vertebrata</taxon>
        <taxon>Euteleostomi</taxon>
        <taxon>Mammalia</taxon>
        <taxon>Eutheria</taxon>
        <taxon>Euarchontoglires</taxon>
        <taxon>Glires</taxon>
        <taxon>Rodentia</taxon>
        <taxon>Myomorpha</taxon>
        <taxon>Muroidea</taxon>
        <taxon>Muridae</taxon>
        <taxon>Murinae</taxon>
        <taxon>Rattus</taxon>
    </lineage>
</organism>